<keyword id="KW-0963">Cytoplasm</keyword>
<keyword id="KW-0413">Isomerase</keyword>
<keyword id="KW-0627">Porphyrin biosynthesis</keyword>
<keyword id="KW-0663">Pyridoxal phosphate</keyword>
<keyword id="KW-1185">Reference proteome</keyword>
<gene>
    <name evidence="1" type="primary">hemL</name>
    <name type="ordered locus">MCA0054</name>
</gene>
<dbReference type="EC" id="5.4.3.8" evidence="1"/>
<dbReference type="EMBL" id="AE017282">
    <property type="protein sequence ID" value="AAU90803.1"/>
    <property type="molecule type" value="Genomic_DNA"/>
</dbReference>
<dbReference type="RefSeq" id="WP_010959426.1">
    <property type="nucleotide sequence ID" value="NC_002977.6"/>
</dbReference>
<dbReference type="SMR" id="Q60CV0"/>
<dbReference type="STRING" id="243233.MCA0054"/>
<dbReference type="GeneID" id="88222404"/>
<dbReference type="KEGG" id="mca:MCA0054"/>
<dbReference type="eggNOG" id="COG0001">
    <property type="taxonomic scope" value="Bacteria"/>
</dbReference>
<dbReference type="HOGENOM" id="CLU_016922_1_5_6"/>
<dbReference type="UniPathway" id="UPA00251">
    <property type="reaction ID" value="UER00317"/>
</dbReference>
<dbReference type="Proteomes" id="UP000006821">
    <property type="component" value="Chromosome"/>
</dbReference>
<dbReference type="GO" id="GO:0005737">
    <property type="term" value="C:cytoplasm"/>
    <property type="evidence" value="ECO:0007669"/>
    <property type="project" value="UniProtKB-SubCell"/>
</dbReference>
<dbReference type="GO" id="GO:0042286">
    <property type="term" value="F:glutamate-1-semialdehyde 2,1-aminomutase activity"/>
    <property type="evidence" value="ECO:0007669"/>
    <property type="project" value="UniProtKB-UniRule"/>
</dbReference>
<dbReference type="GO" id="GO:0030170">
    <property type="term" value="F:pyridoxal phosphate binding"/>
    <property type="evidence" value="ECO:0007669"/>
    <property type="project" value="InterPro"/>
</dbReference>
<dbReference type="GO" id="GO:0008483">
    <property type="term" value="F:transaminase activity"/>
    <property type="evidence" value="ECO:0007669"/>
    <property type="project" value="InterPro"/>
</dbReference>
<dbReference type="GO" id="GO:0006782">
    <property type="term" value="P:protoporphyrinogen IX biosynthetic process"/>
    <property type="evidence" value="ECO:0007669"/>
    <property type="project" value="UniProtKB-UniRule"/>
</dbReference>
<dbReference type="CDD" id="cd00610">
    <property type="entry name" value="OAT_like"/>
    <property type="match status" value="1"/>
</dbReference>
<dbReference type="FunFam" id="3.40.640.10:FF:000021">
    <property type="entry name" value="Glutamate-1-semialdehyde 2,1-aminomutase"/>
    <property type="match status" value="1"/>
</dbReference>
<dbReference type="Gene3D" id="3.90.1150.10">
    <property type="entry name" value="Aspartate Aminotransferase, domain 1"/>
    <property type="match status" value="1"/>
</dbReference>
<dbReference type="Gene3D" id="3.40.640.10">
    <property type="entry name" value="Type I PLP-dependent aspartate aminotransferase-like (Major domain)"/>
    <property type="match status" value="1"/>
</dbReference>
<dbReference type="HAMAP" id="MF_00375">
    <property type="entry name" value="HemL_aminotrans_3"/>
    <property type="match status" value="1"/>
</dbReference>
<dbReference type="InterPro" id="IPR004639">
    <property type="entry name" value="4pyrrol_synth_GluAld_NH2Trfase"/>
</dbReference>
<dbReference type="InterPro" id="IPR005814">
    <property type="entry name" value="Aminotrans_3"/>
</dbReference>
<dbReference type="InterPro" id="IPR049704">
    <property type="entry name" value="Aminotrans_3_PPA_site"/>
</dbReference>
<dbReference type="InterPro" id="IPR015424">
    <property type="entry name" value="PyrdxlP-dep_Trfase"/>
</dbReference>
<dbReference type="InterPro" id="IPR015421">
    <property type="entry name" value="PyrdxlP-dep_Trfase_major"/>
</dbReference>
<dbReference type="InterPro" id="IPR015422">
    <property type="entry name" value="PyrdxlP-dep_Trfase_small"/>
</dbReference>
<dbReference type="NCBIfam" id="TIGR00713">
    <property type="entry name" value="hemL"/>
    <property type="match status" value="1"/>
</dbReference>
<dbReference type="NCBIfam" id="NF000818">
    <property type="entry name" value="PRK00062.1"/>
    <property type="match status" value="1"/>
</dbReference>
<dbReference type="PANTHER" id="PTHR43713">
    <property type="entry name" value="GLUTAMATE-1-SEMIALDEHYDE 2,1-AMINOMUTASE"/>
    <property type="match status" value="1"/>
</dbReference>
<dbReference type="PANTHER" id="PTHR43713:SF3">
    <property type="entry name" value="GLUTAMATE-1-SEMIALDEHYDE 2,1-AMINOMUTASE 1, CHLOROPLASTIC-RELATED"/>
    <property type="match status" value="1"/>
</dbReference>
<dbReference type="Pfam" id="PF00202">
    <property type="entry name" value="Aminotran_3"/>
    <property type="match status" value="1"/>
</dbReference>
<dbReference type="SUPFAM" id="SSF53383">
    <property type="entry name" value="PLP-dependent transferases"/>
    <property type="match status" value="1"/>
</dbReference>
<dbReference type="PROSITE" id="PS00600">
    <property type="entry name" value="AA_TRANSFER_CLASS_3"/>
    <property type="match status" value="1"/>
</dbReference>
<organism>
    <name type="scientific">Methylococcus capsulatus (strain ATCC 33009 / NCIMB 11132 / Bath)</name>
    <dbReference type="NCBI Taxonomy" id="243233"/>
    <lineage>
        <taxon>Bacteria</taxon>
        <taxon>Pseudomonadati</taxon>
        <taxon>Pseudomonadota</taxon>
        <taxon>Gammaproteobacteria</taxon>
        <taxon>Methylococcales</taxon>
        <taxon>Methylococcaceae</taxon>
        <taxon>Methylococcus</taxon>
    </lineage>
</organism>
<sequence>MLDSTTLFADACRFIPGGVNSPVRAFRGVGGTPVFVDRAEGPYVYGVDGKAYIDYVGSWGPMILGHAHPEVLTAVHAAVDRGLSYGAPTVAETAMAKTVCALMPSLDRVRMVSSGTEATMSAIRLARGYTGRDKIVKFEGCYHGHSDSLLVKAGSGALTLGAPSSPGVPANLAEHTLVLPYNDAAAVRDVFARHGAEIACIIVEPVAGNMNCVPPVPGFLETLRDVCDASGAVLIFDEVMTGFRVALGGAQAHYGICPDLTTLGKVIGGGMPVGAFGGRLDIMEQLAPVGQVYQAGTLSGNPVAMAAGLKTLELISQPKFFDELAEKTRHLAEGLRVRAEQAGIPLCVNWVGGMFGLFFTEQQGVSRFDQVMACDQERFRRFFHGMLEEGVYLAPSAFEAGFVSAAHDYQILDRTLTAAERVFAGL</sequence>
<accession>Q60CV0</accession>
<comment type="catalytic activity">
    <reaction evidence="1">
        <text>(S)-4-amino-5-oxopentanoate = 5-aminolevulinate</text>
        <dbReference type="Rhea" id="RHEA:14265"/>
        <dbReference type="ChEBI" id="CHEBI:57501"/>
        <dbReference type="ChEBI" id="CHEBI:356416"/>
        <dbReference type="EC" id="5.4.3.8"/>
    </reaction>
</comment>
<comment type="cofactor">
    <cofactor evidence="1">
        <name>pyridoxal 5'-phosphate</name>
        <dbReference type="ChEBI" id="CHEBI:597326"/>
    </cofactor>
</comment>
<comment type="pathway">
    <text evidence="1">Porphyrin-containing compound metabolism; protoporphyrin-IX biosynthesis; 5-aminolevulinate from L-glutamyl-tRNA(Glu): step 2/2.</text>
</comment>
<comment type="subunit">
    <text evidence="1">Homodimer.</text>
</comment>
<comment type="subcellular location">
    <subcellularLocation>
        <location evidence="1">Cytoplasm</location>
    </subcellularLocation>
</comment>
<comment type="similarity">
    <text evidence="1">Belongs to the class-III pyridoxal-phosphate-dependent aminotransferase family. HemL subfamily.</text>
</comment>
<reference key="1">
    <citation type="journal article" date="2004" name="PLoS Biol.">
        <title>Genomic insights into methanotrophy: the complete genome sequence of Methylococcus capsulatus (Bath).</title>
        <authorList>
            <person name="Ward N.L."/>
            <person name="Larsen O."/>
            <person name="Sakwa J."/>
            <person name="Bruseth L."/>
            <person name="Khouri H.M."/>
            <person name="Durkin A.S."/>
            <person name="Dimitrov G."/>
            <person name="Jiang L."/>
            <person name="Scanlan D."/>
            <person name="Kang K.H."/>
            <person name="Lewis M.R."/>
            <person name="Nelson K.E."/>
            <person name="Methe B.A."/>
            <person name="Wu M."/>
            <person name="Heidelberg J.F."/>
            <person name="Paulsen I.T."/>
            <person name="Fouts D.E."/>
            <person name="Ravel J."/>
            <person name="Tettelin H."/>
            <person name="Ren Q."/>
            <person name="Read T.D."/>
            <person name="DeBoy R.T."/>
            <person name="Seshadri R."/>
            <person name="Salzberg S.L."/>
            <person name="Jensen H.B."/>
            <person name="Birkeland N.K."/>
            <person name="Nelson W.C."/>
            <person name="Dodson R.J."/>
            <person name="Grindhaug S.H."/>
            <person name="Holt I.E."/>
            <person name="Eidhammer I."/>
            <person name="Jonasen I."/>
            <person name="Vanaken S."/>
            <person name="Utterback T.R."/>
            <person name="Feldblyum T.V."/>
            <person name="Fraser C.M."/>
            <person name="Lillehaug J.R."/>
            <person name="Eisen J.A."/>
        </authorList>
    </citation>
    <scope>NUCLEOTIDE SEQUENCE [LARGE SCALE GENOMIC DNA]</scope>
    <source>
        <strain>ATCC 33009 / NCIMB 11132 / Bath</strain>
    </source>
</reference>
<proteinExistence type="inferred from homology"/>
<protein>
    <recommendedName>
        <fullName evidence="1">Glutamate-1-semialdehyde 2,1-aminomutase</fullName>
        <shortName evidence="1">GSA</shortName>
        <ecNumber evidence="1">5.4.3.8</ecNumber>
    </recommendedName>
    <alternativeName>
        <fullName evidence="1">Glutamate-1-semialdehyde aminotransferase</fullName>
        <shortName evidence="1">GSA-AT</shortName>
    </alternativeName>
</protein>
<name>GSA_METCA</name>
<feature type="chain" id="PRO_0000243584" description="Glutamate-1-semialdehyde 2,1-aminomutase">
    <location>
        <begin position="1"/>
        <end position="426"/>
    </location>
</feature>
<feature type="modified residue" description="N6-(pyridoxal phosphate)lysine" evidence="1">
    <location>
        <position position="265"/>
    </location>
</feature>
<evidence type="ECO:0000255" key="1">
    <source>
        <dbReference type="HAMAP-Rule" id="MF_00375"/>
    </source>
</evidence>